<dbReference type="EMBL" id="AB213457">
    <property type="protein sequence ID" value="BAE45239.1"/>
    <property type="molecule type" value="Genomic_DNA"/>
</dbReference>
<dbReference type="EMBL" id="CU329670">
    <property type="protein sequence ID" value="CAB75774.1"/>
    <property type="molecule type" value="Genomic_DNA"/>
</dbReference>
<dbReference type="PIR" id="T50117">
    <property type="entry name" value="T50117"/>
</dbReference>
<dbReference type="RefSeq" id="NP_594685.1">
    <property type="nucleotide sequence ID" value="NM_001020114.2"/>
</dbReference>
<dbReference type="SMR" id="Q9P7Q8"/>
<dbReference type="BioGRID" id="278852">
    <property type="interactions" value="7"/>
</dbReference>
<dbReference type="FunCoup" id="Q9P7Q8">
    <property type="interactions" value="188"/>
</dbReference>
<dbReference type="STRING" id="284812.Q9P7Q8"/>
<dbReference type="PaxDb" id="4896-SPAC1834.06c.1"/>
<dbReference type="EnsemblFungi" id="SPAC1834.06c.1">
    <property type="protein sequence ID" value="SPAC1834.06c.1:pep"/>
    <property type="gene ID" value="SPAC1834.06c"/>
</dbReference>
<dbReference type="GeneID" id="2542388"/>
<dbReference type="KEGG" id="spo:2542388"/>
<dbReference type="PomBase" id="SPAC1834.06c">
    <property type="gene designation" value="pmo25"/>
</dbReference>
<dbReference type="VEuPathDB" id="FungiDB:SPAC1834.06c"/>
<dbReference type="eggNOG" id="KOG1566">
    <property type="taxonomic scope" value="Eukaryota"/>
</dbReference>
<dbReference type="HOGENOM" id="CLU_035755_0_0_1"/>
<dbReference type="InParanoid" id="Q9P7Q8"/>
<dbReference type="OMA" id="AYDHKES"/>
<dbReference type="PhylomeDB" id="Q9P7Q8"/>
<dbReference type="Reactome" id="R-SPO-6798695">
    <property type="pathway name" value="Neutrophil degranulation"/>
</dbReference>
<dbReference type="CD-CODE" id="576F0A76">
    <property type="entry name" value="Centrosome"/>
</dbReference>
<dbReference type="PRO" id="PR:Q9P7Q8"/>
<dbReference type="Proteomes" id="UP000002485">
    <property type="component" value="Chromosome I"/>
</dbReference>
<dbReference type="GO" id="GO:0032153">
    <property type="term" value="C:cell division site"/>
    <property type="evidence" value="ECO:0000314"/>
    <property type="project" value="PomBase"/>
</dbReference>
<dbReference type="GO" id="GO:0051286">
    <property type="term" value="C:cell tip"/>
    <property type="evidence" value="ECO:0007005"/>
    <property type="project" value="PomBase"/>
</dbReference>
<dbReference type="GO" id="GO:0005737">
    <property type="term" value="C:cytoplasm"/>
    <property type="evidence" value="ECO:0000314"/>
    <property type="project" value="PomBase"/>
</dbReference>
<dbReference type="GO" id="GO:0005829">
    <property type="term" value="C:cytosol"/>
    <property type="evidence" value="ECO:0007005"/>
    <property type="project" value="PomBase"/>
</dbReference>
<dbReference type="GO" id="GO:0044732">
    <property type="term" value="C:mitotic spindle pole body"/>
    <property type="evidence" value="ECO:0000314"/>
    <property type="project" value="PomBase"/>
</dbReference>
<dbReference type="GO" id="GO:0071958">
    <property type="term" value="C:new mitotic spindle pole body"/>
    <property type="evidence" value="ECO:0000314"/>
    <property type="project" value="PomBase"/>
</dbReference>
<dbReference type="GO" id="GO:0035839">
    <property type="term" value="C:non-growing cell tip"/>
    <property type="evidence" value="ECO:0000314"/>
    <property type="project" value="PomBase"/>
</dbReference>
<dbReference type="GO" id="GO:0005634">
    <property type="term" value="C:nucleus"/>
    <property type="evidence" value="ECO:0000314"/>
    <property type="project" value="PomBase"/>
</dbReference>
<dbReference type="GO" id="GO:0043539">
    <property type="term" value="F:protein serine/threonine kinase activator activity"/>
    <property type="evidence" value="ECO:0000269"/>
    <property type="project" value="PomBase"/>
</dbReference>
<dbReference type="GO" id="GO:0035556">
    <property type="term" value="P:intracellular signal transduction"/>
    <property type="evidence" value="ECO:0000318"/>
    <property type="project" value="GO_Central"/>
</dbReference>
<dbReference type="GO" id="GO:0071574">
    <property type="term" value="P:protein localization to medial cortex"/>
    <property type="evidence" value="ECO:0000315"/>
    <property type="project" value="PomBase"/>
</dbReference>
<dbReference type="GO" id="GO:0062200">
    <property type="term" value="P:RAM/MOR signaling"/>
    <property type="evidence" value="ECO:0000303"/>
    <property type="project" value="PomBase"/>
</dbReference>
<dbReference type="GO" id="GO:2000100">
    <property type="term" value="P:regulation of establishment or maintenance of bipolar cell polarity regulating cell shape"/>
    <property type="evidence" value="ECO:0000315"/>
    <property type="project" value="PomBase"/>
</dbReference>
<dbReference type="GO" id="GO:0070507">
    <property type="term" value="P:regulation of microtubule cytoskeleton organization"/>
    <property type="evidence" value="ECO:0000315"/>
    <property type="project" value="PomBase"/>
</dbReference>
<dbReference type="FunFam" id="1.25.10.10:FF:000257">
    <property type="entry name" value="Conidiophore development protein hymA"/>
    <property type="match status" value="1"/>
</dbReference>
<dbReference type="Gene3D" id="1.25.10.10">
    <property type="entry name" value="Leucine-rich Repeat Variant"/>
    <property type="match status" value="1"/>
</dbReference>
<dbReference type="InterPro" id="IPR011989">
    <property type="entry name" value="ARM-like"/>
</dbReference>
<dbReference type="InterPro" id="IPR016024">
    <property type="entry name" value="ARM-type_fold"/>
</dbReference>
<dbReference type="InterPro" id="IPR013878">
    <property type="entry name" value="Mo25"/>
</dbReference>
<dbReference type="PANTHER" id="PTHR10182">
    <property type="entry name" value="CALCIUM-BINDING PROTEIN 39-RELATED"/>
    <property type="match status" value="1"/>
</dbReference>
<dbReference type="PANTHER" id="PTHR10182:SF3">
    <property type="entry name" value="PROTEIN MO25"/>
    <property type="match status" value="1"/>
</dbReference>
<dbReference type="Pfam" id="PF08569">
    <property type="entry name" value="Mo25"/>
    <property type="match status" value="1"/>
</dbReference>
<dbReference type="SUPFAM" id="SSF48371">
    <property type="entry name" value="ARM repeat"/>
    <property type="match status" value="1"/>
</dbReference>
<evidence type="ECO:0000305" key="1"/>
<reference key="1">
    <citation type="journal article" date="2005" name="EMBO J.">
        <title>Fission yeast MO25 protein is localized at SPB and septum and is essential for cell morphogenesis.</title>
        <authorList>
            <person name="Kanai M."/>
            <person name="Kume K."/>
            <person name="Miyahara K."/>
            <person name="Sakai K."/>
            <person name="Nakamura K."/>
            <person name="Leonhard K."/>
            <person name="Wiley D.J."/>
            <person name="Verde F."/>
            <person name="Toda T."/>
            <person name="Hirata D."/>
        </authorList>
    </citation>
    <scope>NUCLEOTIDE SEQUENCE [GENOMIC DNA]</scope>
</reference>
<reference key="2">
    <citation type="journal article" date="2002" name="Nature">
        <title>The genome sequence of Schizosaccharomyces pombe.</title>
        <authorList>
            <person name="Wood V."/>
            <person name="Gwilliam R."/>
            <person name="Rajandream M.A."/>
            <person name="Lyne M.H."/>
            <person name="Lyne R."/>
            <person name="Stewart A."/>
            <person name="Sgouros J.G."/>
            <person name="Peat N."/>
            <person name="Hayles J."/>
            <person name="Baker S.G."/>
            <person name="Basham D."/>
            <person name="Bowman S."/>
            <person name="Brooks K."/>
            <person name="Brown D."/>
            <person name="Brown S."/>
            <person name="Chillingworth T."/>
            <person name="Churcher C.M."/>
            <person name="Collins M."/>
            <person name="Connor R."/>
            <person name="Cronin A."/>
            <person name="Davis P."/>
            <person name="Feltwell T."/>
            <person name="Fraser A."/>
            <person name="Gentles S."/>
            <person name="Goble A."/>
            <person name="Hamlin N."/>
            <person name="Harris D.E."/>
            <person name="Hidalgo J."/>
            <person name="Hodgson G."/>
            <person name="Holroyd S."/>
            <person name="Hornsby T."/>
            <person name="Howarth S."/>
            <person name="Huckle E.J."/>
            <person name="Hunt S."/>
            <person name="Jagels K."/>
            <person name="James K.D."/>
            <person name="Jones L."/>
            <person name="Jones M."/>
            <person name="Leather S."/>
            <person name="McDonald S."/>
            <person name="McLean J."/>
            <person name="Mooney P."/>
            <person name="Moule S."/>
            <person name="Mungall K.L."/>
            <person name="Murphy L.D."/>
            <person name="Niblett D."/>
            <person name="Odell C."/>
            <person name="Oliver K."/>
            <person name="O'Neil S."/>
            <person name="Pearson D."/>
            <person name="Quail M.A."/>
            <person name="Rabbinowitsch E."/>
            <person name="Rutherford K.M."/>
            <person name="Rutter S."/>
            <person name="Saunders D."/>
            <person name="Seeger K."/>
            <person name="Sharp S."/>
            <person name="Skelton J."/>
            <person name="Simmonds M.N."/>
            <person name="Squares R."/>
            <person name="Squares S."/>
            <person name="Stevens K."/>
            <person name="Taylor K."/>
            <person name="Taylor R.G."/>
            <person name="Tivey A."/>
            <person name="Walsh S.V."/>
            <person name="Warren T."/>
            <person name="Whitehead S."/>
            <person name="Woodward J.R."/>
            <person name="Volckaert G."/>
            <person name="Aert R."/>
            <person name="Robben J."/>
            <person name="Grymonprez B."/>
            <person name="Weltjens I."/>
            <person name="Vanstreels E."/>
            <person name="Rieger M."/>
            <person name="Schaefer M."/>
            <person name="Mueller-Auer S."/>
            <person name="Gabel C."/>
            <person name="Fuchs M."/>
            <person name="Duesterhoeft A."/>
            <person name="Fritzc C."/>
            <person name="Holzer E."/>
            <person name="Moestl D."/>
            <person name="Hilbert H."/>
            <person name="Borzym K."/>
            <person name="Langer I."/>
            <person name="Beck A."/>
            <person name="Lehrach H."/>
            <person name="Reinhardt R."/>
            <person name="Pohl T.M."/>
            <person name="Eger P."/>
            <person name="Zimmermann W."/>
            <person name="Wedler H."/>
            <person name="Wambutt R."/>
            <person name="Purnelle B."/>
            <person name="Goffeau A."/>
            <person name="Cadieu E."/>
            <person name="Dreano S."/>
            <person name="Gloux S."/>
            <person name="Lelaure V."/>
            <person name="Mottier S."/>
            <person name="Galibert F."/>
            <person name="Aves S.J."/>
            <person name="Xiang Z."/>
            <person name="Hunt C."/>
            <person name="Moore K."/>
            <person name="Hurst S.M."/>
            <person name="Lucas M."/>
            <person name="Rochet M."/>
            <person name="Gaillardin C."/>
            <person name="Tallada V.A."/>
            <person name="Garzon A."/>
            <person name="Thode G."/>
            <person name="Daga R.R."/>
            <person name="Cruzado L."/>
            <person name="Jimenez J."/>
            <person name="Sanchez M."/>
            <person name="del Rey F."/>
            <person name="Benito J."/>
            <person name="Dominguez A."/>
            <person name="Revuelta J.L."/>
            <person name="Moreno S."/>
            <person name="Armstrong J."/>
            <person name="Forsburg S.L."/>
            <person name="Cerutti L."/>
            <person name="Lowe T."/>
            <person name="McCombie W.R."/>
            <person name="Paulsen I."/>
            <person name="Potashkin J."/>
            <person name="Shpakovski G.V."/>
            <person name="Ussery D."/>
            <person name="Barrell B.G."/>
            <person name="Nurse P."/>
        </authorList>
    </citation>
    <scope>NUCLEOTIDE SEQUENCE [LARGE SCALE GENOMIC DNA]</scope>
    <source>
        <strain>972 / ATCC 24843</strain>
    </source>
</reference>
<proteinExistence type="inferred from homology"/>
<name>PMO25_SCHPO</name>
<keyword id="KW-1185">Reference proteome</keyword>
<sequence>MSFLFNKRPKSTQDVVRCLCDNLPKLEINNDKKKSFEEVSKCLQNLRVSLCGTAEVEPDADLVSDLSFQIYQSNLPFLLVRYLPKLEFESKKDTGLIFSALLRRHVASRYPTVDYMLAHPQIFPVLVSYYRYQEVAFTAGSILRECSRHEALNEVLLNSRDFWTFFSLIQASSFDMASDAFSTFKSILLNHKSQVAEFISYHFDEFFKQYTVLLKSENYVTKRQSLKLLGEILLNRANRSVMTRYISSAENLKLMMILLRDKSKNIQFEAFHVFKLFVANPEKSEEVIEILRRNKSKLISYLSAFHTDRKNDEQFNDERAFVIKQIERL</sequence>
<gene>
    <name type="primary">pmo25</name>
    <name type="ORF">SPAC1834.06c</name>
</gene>
<feature type="chain" id="PRO_0000209837" description="Mo25-like protein">
    <location>
        <begin position="1"/>
        <end position="329"/>
    </location>
</feature>
<organism>
    <name type="scientific">Schizosaccharomyces pombe (strain 972 / ATCC 24843)</name>
    <name type="common">Fission yeast</name>
    <dbReference type="NCBI Taxonomy" id="284812"/>
    <lineage>
        <taxon>Eukaryota</taxon>
        <taxon>Fungi</taxon>
        <taxon>Dikarya</taxon>
        <taxon>Ascomycota</taxon>
        <taxon>Taphrinomycotina</taxon>
        <taxon>Schizosaccharomycetes</taxon>
        <taxon>Schizosaccharomycetales</taxon>
        <taxon>Schizosaccharomycetaceae</taxon>
        <taxon>Schizosaccharomyces</taxon>
    </lineage>
</organism>
<accession>Q9P7Q8</accession>
<accession>Q3MUH6</accession>
<comment type="similarity">
    <text evidence="1">Belongs to the Mo25 family.</text>
</comment>
<protein>
    <recommendedName>
        <fullName>Mo25-like protein</fullName>
    </recommendedName>
</protein>